<protein>
    <recommendedName>
        <fullName>Probable acetylornithine aminotransferase, mitochondrial</fullName>
        <shortName>ACOAT</shortName>
        <ecNumber>2.6.1.11</ecNumber>
    </recommendedName>
</protein>
<feature type="transit peptide" description="Mitochondrion" evidence="2">
    <location>
        <begin position="1"/>
        <end status="unknown"/>
    </location>
</feature>
<feature type="chain" id="PRO_0000327776" description="Probable acetylornithine aminotransferase, mitochondrial">
    <location>
        <begin status="unknown"/>
        <end position="453"/>
    </location>
</feature>
<feature type="modified residue" description="N6-(pyridoxal phosphate)lysine" evidence="1">
    <location>
        <position position="302"/>
    </location>
</feature>
<proteinExistence type="inferred from homology"/>
<name>ARGD_DICDI</name>
<gene>
    <name type="primary">argD</name>
    <name type="synonym">arg8</name>
    <name type="ORF">DDB_G0269526</name>
</gene>
<accession>Q55DT8</accession>
<sequence>MFNKLNKINKIKNCFNKSIYQINYSSKPIFKEGITNVKLDRDNKDGTSDYIKLHDNVIMNTYGRVSDIVFTHGKDSWLYDMKGDKYLDFGAGIAVNALGHSNDGWSEVVANQSKKLTHLSNLYYNQPAIELAQSMIASTPIFDKVFFANSGTEANEAALKFAKKIGIAKGGVDKHEIIAFSHGFSGRSMGSLSCTHKSKYREIYGPLVPGVHFAEYNDIESVKKLMSKSKTCAVIIEPVQGEGGLEAATVEFMQQLYKLCKENDCLLIVDEVQCGIGRTGQLWAHTRFDTEKCKPDIMTLAKPLAGGLPIGAVLVSDKVASEIKPGDHGTTFGGGPLVCEVGKYVFERISQPSFLKEVQEKGKYLTDGLKKLKDQFPNSILEIRTVGGLFVGIQLDHNVSDLVSYAKSQKILIINAGDDVIRFCPPLTITKQEIDQLLLVLKNYLIKVNSNKK</sequence>
<comment type="catalytic activity">
    <reaction>
        <text>N(2)-acetyl-L-ornithine + 2-oxoglutarate = N-acetyl-L-glutamate 5-semialdehyde + L-glutamate</text>
        <dbReference type="Rhea" id="RHEA:18049"/>
        <dbReference type="ChEBI" id="CHEBI:16810"/>
        <dbReference type="ChEBI" id="CHEBI:29123"/>
        <dbReference type="ChEBI" id="CHEBI:29985"/>
        <dbReference type="ChEBI" id="CHEBI:57805"/>
        <dbReference type="EC" id="2.6.1.11"/>
    </reaction>
</comment>
<comment type="cofactor">
    <cofactor evidence="1">
        <name>pyridoxal 5'-phosphate</name>
        <dbReference type="ChEBI" id="CHEBI:597326"/>
    </cofactor>
</comment>
<comment type="pathway">
    <text>Amino-acid biosynthesis; L-arginine biosynthesis; N(2)-acetyl-L-ornithine from L-glutamate: step 4/4.</text>
</comment>
<comment type="subcellular location">
    <subcellularLocation>
        <location evidence="1">Mitochondrion matrix</location>
    </subcellularLocation>
</comment>
<comment type="similarity">
    <text evidence="3">Belongs to the class-III pyridoxal-phosphate-dependent aminotransferase family.</text>
</comment>
<organism>
    <name type="scientific">Dictyostelium discoideum</name>
    <name type="common">Social amoeba</name>
    <dbReference type="NCBI Taxonomy" id="44689"/>
    <lineage>
        <taxon>Eukaryota</taxon>
        <taxon>Amoebozoa</taxon>
        <taxon>Evosea</taxon>
        <taxon>Eumycetozoa</taxon>
        <taxon>Dictyostelia</taxon>
        <taxon>Dictyosteliales</taxon>
        <taxon>Dictyosteliaceae</taxon>
        <taxon>Dictyostelium</taxon>
    </lineage>
</organism>
<evidence type="ECO:0000250" key="1"/>
<evidence type="ECO:0000255" key="2"/>
<evidence type="ECO:0000305" key="3"/>
<keyword id="KW-0028">Amino-acid biosynthesis</keyword>
<keyword id="KW-0032">Aminotransferase</keyword>
<keyword id="KW-0055">Arginine biosynthesis</keyword>
<keyword id="KW-0496">Mitochondrion</keyword>
<keyword id="KW-0663">Pyridoxal phosphate</keyword>
<keyword id="KW-1185">Reference proteome</keyword>
<keyword id="KW-0808">Transferase</keyword>
<keyword id="KW-0809">Transit peptide</keyword>
<reference key="1">
    <citation type="journal article" date="2005" name="Nature">
        <title>The genome of the social amoeba Dictyostelium discoideum.</title>
        <authorList>
            <person name="Eichinger L."/>
            <person name="Pachebat J.A."/>
            <person name="Gloeckner G."/>
            <person name="Rajandream M.A."/>
            <person name="Sucgang R."/>
            <person name="Berriman M."/>
            <person name="Song J."/>
            <person name="Olsen R."/>
            <person name="Szafranski K."/>
            <person name="Xu Q."/>
            <person name="Tunggal B."/>
            <person name="Kummerfeld S."/>
            <person name="Madera M."/>
            <person name="Konfortov B.A."/>
            <person name="Rivero F."/>
            <person name="Bankier A.T."/>
            <person name="Lehmann R."/>
            <person name="Hamlin N."/>
            <person name="Davies R."/>
            <person name="Gaudet P."/>
            <person name="Fey P."/>
            <person name="Pilcher K."/>
            <person name="Chen G."/>
            <person name="Saunders D."/>
            <person name="Sodergren E.J."/>
            <person name="Davis P."/>
            <person name="Kerhornou A."/>
            <person name="Nie X."/>
            <person name="Hall N."/>
            <person name="Anjard C."/>
            <person name="Hemphill L."/>
            <person name="Bason N."/>
            <person name="Farbrother P."/>
            <person name="Desany B."/>
            <person name="Just E."/>
            <person name="Morio T."/>
            <person name="Rost R."/>
            <person name="Churcher C.M."/>
            <person name="Cooper J."/>
            <person name="Haydock S."/>
            <person name="van Driessche N."/>
            <person name="Cronin A."/>
            <person name="Goodhead I."/>
            <person name="Muzny D.M."/>
            <person name="Mourier T."/>
            <person name="Pain A."/>
            <person name="Lu M."/>
            <person name="Harper D."/>
            <person name="Lindsay R."/>
            <person name="Hauser H."/>
            <person name="James K.D."/>
            <person name="Quiles M."/>
            <person name="Madan Babu M."/>
            <person name="Saito T."/>
            <person name="Buchrieser C."/>
            <person name="Wardroper A."/>
            <person name="Felder M."/>
            <person name="Thangavelu M."/>
            <person name="Johnson D."/>
            <person name="Knights A."/>
            <person name="Loulseged H."/>
            <person name="Mungall K.L."/>
            <person name="Oliver K."/>
            <person name="Price C."/>
            <person name="Quail M.A."/>
            <person name="Urushihara H."/>
            <person name="Hernandez J."/>
            <person name="Rabbinowitsch E."/>
            <person name="Steffen D."/>
            <person name="Sanders M."/>
            <person name="Ma J."/>
            <person name="Kohara Y."/>
            <person name="Sharp S."/>
            <person name="Simmonds M.N."/>
            <person name="Spiegler S."/>
            <person name="Tivey A."/>
            <person name="Sugano S."/>
            <person name="White B."/>
            <person name="Walker D."/>
            <person name="Woodward J.R."/>
            <person name="Winckler T."/>
            <person name="Tanaka Y."/>
            <person name="Shaulsky G."/>
            <person name="Schleicher M."/>
            <person name="Weinstock G.M."/>
            <person name="Rosenthal A."/>
            <person name="Cox E.C."/>
            <person name="Chisholm R.L."/>
            <person name="Gibbs R.A."/>
            <person name="Loomis W.F."/>
            <person name="Platzer M."/>
            <person name="Kay R.R."/>
            <person name="Williams J.G."/>
            <person name="Dear P.H."/>
            <person name="Noegel A.A."/>
            <person name="Barrell B.G."/>
            <person name="Kuspa A."/>
        </authorList>
    </citation>
    <scope>NUCLEOTIDE SEQUENCE [LARGE SCALE GENOMIC DNA]</scope>
    <source>
        <strain>AX4</strain>
    </source>
</reference>
<dbReference type="EC" id="2.6.1.11"/>
<dbReference type="EMBL" id="AAFI02000005">
    <property type="protein sequence ID" value="EAL72113.1"/>
    <property type="molecule type" value="Genomic_DNA"/>
</dbReference>
<dbReference type="RefSeq" id="XP_646043.1">
    <property type="nucleotide sequence ID" value="XM_640951.1"/>
</dbReference>
<dbReference type="SMR" id="Q55DT8"/>
<dbReference type="FunCoup" id="Q55DT8">
    <property type="interactions" value="109"/>
</dbReference>
<dbReference type="STRING" id="44689.Q55DT8"/>
<dbReference type="PaxDb" id="44689-DDB0231481"/>
<dbReference type="EnsemblProtists" id="EAL72113">
    <property type="protein sequence ID" value="EAL72113"/>
    <property type="gene ID" value="DDB_G0269526"/>
</dbReference>
<dbReference type="GeneID" id="8616990"/>
<dbReference type="KEGG" id="ddi:DDB_G0269526"/>
<dbReference type="dictyBase" id="DDB_G0269526">
    <property type="gene designation" value="argD"/>
</dbReference>
<dbReference type="VEuPathDB" id="AmoebaDB:DDB_G0269526"/>
<dbReference type="eggNOG" id="KOG1401">
    <property type="taxonomic scope" value="Eukaryota"/>
</dbReference>
<dbReference type="HOGENOM" id="CLU_016922_10_1_1"/>
<dbReference type="InParanoid" id="Q55DT8"/>
<dbReference type="OMA" id="MVPGFKY"/>
<dbReference type="PhylomeDB" id="Q55DT8"/>
<dbReference type="UniPathway" id="UPA00068">
    <property type="reaction ID" value="UER00109"/>
</dbReference>
<dbReference type="PRO" id="PR:Q55DT8"/>
<dbReference type="Proteomes" id="UP000002195">
    <property type="component" value="Chromosome 1"/>
</dbReference>
<dbReference type="GO" id="GO:0005759">
    <property type="term" value="C:mitochondrial matrix"/>
    <property type="evidence" value="ECO:0000318"/>
    <property type="project" value="GO_Central"/>
</dbReference>
<dbReference type="GO" id="GO:0042802">
    <property type="term" value="F:identical protein binding"/>
    <property type="evidence" value="ECO:0000318"/>
    <property type="project" value="GO_Central"/>
</dbReference>
<dbReference type="GO" id="GO:0003992">
    <property type="term" value="F:N2-acetyl-L-ornithine:2-oxoglutarate 5-aminotransferase activity"/>
    <property type="evidence" value="ECO:0000250"/>
    <property type="project" value="dictyBase"/>
</dbReference>
<dbReference type="GO" id="GO:0030170">
    <property type="term" value="F:pyridoxal phosphate binding"/>
    <property type="evidence" value="ECO:0000318"/>
    <property type="project" value="GO_Central"/>
</dbReference>
<dbReference type="GO" id="GO:0006526">
    <property type="term" value="P:L-arginine biosynthetic process"/>
    <property type="evidence" value="ECO:0007669"/>
    <property type="project" value="UniProtKB-UniPathway"/>
</dbReference>
<dbReference type="CDD" id="cd00610">
    <property type="entry name" value="OAT_like"/>
    <property type="match status" value="1"/>
</dbReference>
<dbReference type="FunFam" id="3.40.640.10:FF:000004">
    <property type="entry name" value="Acetylornithine aminotransferase"/>
    <property type="match status" value="1"/>
</dbReference>
<dbReference type="Gene3D" id="3.90.1150.10">
    <property type="entry name" value="Aspartate Aminotransferase, domain 1"/>
    <property type="match status" value="1"/>
</dbReference>
<dbReference type="Gene3D" id="3.40.640.10">
    <property type="entry name" value="Type I PLP-dependent aspartate aminotransferase-like (Major domain)"/>
    <property type="match status" value="1"/>
</dbReference>
<dbReference type="HAMAP" id="MF_01107">
    <property type="entry name" value="ArgD_aminotrans_3"/>
    <property type="match status" value="1"/>
</dbReference>
<dbReference type="InterPro" id="IPR004636">
    <property type="entry name" value="AcOrn/SuccOrn_fam"/>
</dbReference>
<dbReference type="InterPro" id="IPR005814">
    <property type="entry name" value="Aminotrans_3"/>
</dbReference>
<dbReference type="InterPro" id="IPR049704">
    <property type="entry name" value="Aminotrans_3_PPA_site"/>
</dbReference>
<dbReference type="InterPro" id="IPR050103">
    <property type="entry name" value="Class-III_PLP-dep_AT"/>
</dbReference>
<dbReference type="InterPro" id="IPR015424">
    <property type="entry name" value="PyrdxlP-dep_Trfase"/>
</dbReference>
<dbReference type="InterPro" id="IPR015421">
    <property type="entry name" value="PyrdxlP-dep_Trfase_major"/>
</dbReference>
<dbReference type="InterPro" id="IPR015422">
    <property type="entry name" value="PyrdxlP-dep_Trfase_small"/>
</dbReference>
<dbReference type="NCBIfam" id="TIGR00707">
    <property type="entry name" value="argD"/>
    <property type="match status" value="1"/>
</dbReference>
<dbReference type="NCBIfam" id="NF002325">
    <property type="entry name" value="PRK01278.1"/>
    <property type="match status" value="1"/>
</dbReference>
<dbReference type="PANTHER" id="PTHR11986:SF79">
    <property type="entry name" value="ACETYLORNITHINE AMINOTRANSFERASE, MITOCHONDRIAL"/>
    <property type="match status" value="1"/>
</dbReference>
<dbReference type="PANTHER" id="PTHR11986">
    <property type="entry name" value="AMINOTRANSFERASE CLASS III"/>
    <property type="match status" value="1"/>
</dbReference>
<dbReference type="Pfam" id="PF00202">
    <property type="entry name" value="Aminotran_3"/>
    <property type="match status" value="1"/>
</dbReference>
<dbReference type="PIRSF" id="PIRSF000521">
    <property type="entry name" value="Transaminase_4ab_Lys_Orn"/>
    <property type="match status" value="1"/>
</dbReference>
<dbReference type="SUPFAM" id="SSF53383">
    <property type="entry name" value="PLP-dependent transferases"/>
    <property type="match status" value="1"/>
</dbReference>
<dbReference type="PROSITE" id="PS00600">
    <property type="entry name" value="AA_TRANSFER_CLASS_3"/>
    <property type="match status" value="1"/>
</dbReference>